<sequence length="291" mass="31284">MFEGVFPALITPFQRNHGKNLDLDGLRSNIAHLVAAGVHGVVPCGSTGESATLSFAEHEQVVEVTMDEAGGKVPVLAGTGSNNTSEALRFTRAAKDVGADGVLVISPYYNKPNRSGLIKHYTAIADLDIPVVVYNVPGRTGQNITPDIIAELAKHPNIVGVKEASGDLGQISTIIELTRDEDFAVISGDDNLTLPILSLGGKGVISVAANIYPRPLIEMYEAAQKGDYETAREIHFKYSPLFRAMFYESNPIPVKKAAEILGMAAGPLRLPLDEASEQTTERLKEVLSRYD</sequence>
<gene>
    <name evidence="1" type="primary">dapA</name>
    <name type="ordered locus">Mhun_1492</name>
</gene>
<keyword id="KW-0028">Amino-acid biosynthesis</keyword>
<keyword id="KW-0963">Cytoplasm</keyword>
<keyword id="KW-0220">Diaminopimelate biosynthesis</keyword>
<keyword id="KW-0456">Lyase</keyword>
<keyword id="KW-0457">Lysine biosynthesis</keyword>
<keyword id="KW-1185">Reference proteome</keyword>
<keyword id="KW-0704">Schiff base</keyword>
<reference key="1">
    <citation type="journal article" date="2016" name="Stand. Genomic Sci.">
        <title>Complete genome sequence of Methanospirillum hungatei type strain JF1.</title>
        <authorList>
            <person name="Gunsalus R.P."/>
            <person name="Cook L.E."/>
            <person name="Crable B."/>
            <person name="Rohlin L."/>
            <person name="McDonald E."/>
            <person name="Mouttaki H."/>
            <person name="Sieber J.R."/>
            <person name="Poweleit N."/>
            <person name="Zhou H."/>
            <person name="Lapidus A.L."/>
            <person name="Daligault H.E."/>
            <person name="Land M."/>
            <person name="Gilna P."/>
            <person name="Ivanova N."/>
            <person name="Kyrpides N."/>
            <person name="Culley D.E."/>
            <person name="McInerney M.J."/>
        </authorList>
    </citation>
    <scope>NUCLEOTIDE SEQUENCE [LARGE SCALE GENOMIC DNA]</scope>
    <source>
        <strain>ATCC 27890 / DSM 864 / NBRC 100397 / JF-1</strain>
    </source>
</reference>
<protein>
    <recommendedName>
        <fullName evidence="1">4-hydroxy-tetrahydrodipicolinate synthase</fullName>
        <shortName evidence="1">HTPA synthase</shortName>
        <ecNumber evidence="1">4.3.3.7</ecNumber>
    </recommendedName>
</protein>
<name>DAPA_METHJ</name>
<feature type="chain" id="PRO_1000050216" description="4-hydroxy-tetrahydrodipicolinate synthase">
    <location>
        <begin position="1"/>
        <end position="291"/>
    </location>
</feature>
<feature type="active site" description="Proton donor/acceptor" evidence="1">
    <location>
        <position position="134"/>
    </location>
</feature>
<feature type="active site" description="Schiff-base intermediate with substrate" evidence="1">
    <location>
        <position position="162"/>
    </location>
</feature>
<feature type="binding site" evidence="1">
    <location>
        <position position="47"/>
    </location>
    <ligand>
        <name>pyruvate</name>
        <dbReference type="ChEBI" id="CHEBI:15361"/>
    </ligand>
</feature>
<feature type="binding site" evidence="1">
    <location>
        <position position="205"/>
    </location>
    <ligand>
        <name>pyruvate</name>
        <dbReference type="ChEBI" id="CHEBI:15361"/>
    </ligand>
</feature>
<feature type="site" description="Part of a proton relay during catalysis" evidence="1">
    <location>
        <position position="46"/>
    </location>
</feature>
<feature type="site" description="Part of a proton relay during catalysis" evidence="1">
    <location>
        <position position="109"/>
    </location>
</feature>
<accession>Q2FNR0</accession>
<comment type="function">
    <text evidence="1">Catalyzes the condensation of (S)-aspartate-beta-semialdehyde [(S)-ASA] and pyruvate to 4-hydroxy-tetrahydrodipicolinate (HTPA).</text>
</comment>
<comment type="catalytic activity">
    <reaction evidence="1">
        <text>L-aspartate 4-semialdehyde + pyruvate = (2S,4S)-4-hydroxy-2,3,4,5-tetrahydrodipicolinate + H2O + H(+)</text>
        <dbReference type="Rhea" id="RHEA:34171"/>
        <dbReference type="ChEBI" id="CHEBI:15361"/>
        <dbReference type="ChEBI" id="CHEBI:15377"/>
        <dbReference type="ChEBI" id="CHEBI:15378"/>
        <dbReference type="ChEBI" id="CHEBI:67139"/>
        <dbReference type="ChEBI" id="CHEBI:537519"/>
        <dbReference type="EC" id="4.3.3.7"/>
    </reaction>
</comment>
<comment type="pathway">
    <text evidence="1">Amino-acid biosynthesis; L-lysine biosynthesis via DAP pathway; (S)-tetrahydrodipicolinate from L-aspartate: step 3/4.</text>
</comment>
<comment type="subunit">
    <text evidence="1">Homotetramer; dimer of dimers.</text>
</comment>
<comment type="subcellular location">
    <subcellularLocation>
        <location evidence="1">Cytoplasm</location>
    </subcellularLocation>
</comment>
<comment type="similarity">
    <text evidence="1">Belongs to the DapA family.</text>
</comment>
<comment type="caution">
    <text evidence="2">Was originally thought to be a dihydrodipicolinate synthase (DHDPS), catalyzing the condensation of (S)-aspartate-beta-semialdehyde [(S)-ASA] and pyruvate to dihydrodipicolinate (DHDP). However, it was shown in E.coli that the product of the enzymatic reaction is not dihydrodipicolinate but in fact (4S)-4-hydroxy-2,3,4,5-tetrahydro-(2S)-dipicolinic acid (HTPA), and that the consecutive dehydration reaction leading to DHDP is not spontaneous but catalyzed by DapB.</text>
</comment>
<organism>
    <name type="scientific">Methanospirillum hungatei JF-1 (strain ATCC 27890 / DSM 864 / NBRC 100397 / JF-1)</name>
    <dbReference type="NCBI Taxonomy" id="323259"/>
    <lineage>
        <taxon>Archaea</taxon>
        <taxon>Methanobacteriati</taxon>
        <taxon>Methanobacteriota</taxon>
        <taxon>Stenosarchaea group</taxon>
        <taxon>Methanomicrobia</taxon>
        <taxon>Methanomicrobiales</taxon>
        <taxon>Methanospirillaceae</taxon>
        <taxon>Methanospirillum</taxon>
    </lineage>
</organism>
<evidence type="ECO:0000255" key="1">
    <source>
        <dbReference type="HAMAP-Rule" id="MF_00418"/>
    </source>
</evidence>
<evidence type="ECO:0000305" key="2"/>
<dbReference type="EC" id="4.3.3.7" evidence="1"/>
<dbReference type="EMBL" id="CP000254">
    <property type="protein sequence ID" value="ABD41226.1"/>
    <property type="molecule type" value="Genomic_DNA"/>
</dbReference>
<dbReference type="RefSeq" id="WP_011448495.1">
    <property type="nucleotide sequence ID" value="NC_007796.1"/>
</dbReference>
<dbReference type="SMR" id="Q2FNR0"/>
<dbReference type="FunCoup" id="Q2FNR0">
    <property type="interactions" value="111"/>
</dbReference>
<dbReference type="STRING" id="323259.Mhun_1492"/>
<dbReference type="EnsemblBacteria" id="ABD41226">
    <property type="protein sequence ID" value="ABD41226"/>
    <property type="gene ID" value="Mhun_1492"/>
</dbReference>
<dbReference type="GeneID" id="3922723"/>
<dbReference type="KEGG" id="mhu:Mhun_1492"/>
<dbReference type="eggNOG" id="arCOG04172">
    <property type="taxonomic scope" value="Archaea"/>
</dbReference>
<dbReference type="HOGENOM" id="CLU_049343_7_0_2"/>
<dbReference type="InParanoid" id="Q2FNR0"/>
<dbReference type="OrthoDB" id="33636at2157"/>
<dbReference type="UniPathway" id="UPA00034">
    <property type="reaction ID" value="UER00017"/>
</dbReference>
<dbReference type="Proteomes" id="UP000001941">
    <property type="component" value="Chromosome"/>
</dbReference>
<dbReference type="GO" id="GO:0005737">
    <property type="term" value="C:cytoplasm"/>
    <property type="evidence" value="ECO:0007669"/>
    <property type="project" value="UniProtKB-SubCell"/>
</dbReference>
<dbReference type="GO" id="GO:0008675">
    <property type="term" value="F:2-dehydro-3-deoxy-phosphogluconate aldolase activity"/>
    <property type="evidence" value="ECO:0007669"/>
    <property type="project" value="UniProtKB-ARBA"/>
</dbReference>
<dbReference type="GO" id="GO:0008840">
    <property type="term" value="F:4-hydroxy-tetrahydrodipicolinate synthase activity"/>
    <property type="evidence" value="ECO:0007669"/>
    <property type="project" value="UniProtKB-UniRule"/>
</dbReference>
<dbReference type="GO" id="GO:0019877">
    <property type="term" value="P:diaminopimelate biosynthetic process"/>
    <property type="evidence" value="ECO:0007669"/>
    <property type="project" value="UniProtKB-UniRule"/>
</dbReference>
<dbReference type="GO" id="GO:0009089">
    <property type="term" value="P:lysine biosynthetic process via diaminopimelate"/>
    <property type="evidence" value="ECO:0007669"/>
    <property type="project" value="UniProtKB-UniRule"/>
</dbReference>
<dbReference type="CDD" id="cd00950">
    <property type="entry name" value="DHDPS"/>
    <property type="match status" value="1"/>
</dbReference>
<dbReference type="Gene3D" id="3.20.20.70">
    <property type="entry name" value="Aldolase class I"/>
    <property type="match status" value="1"/>
</dbReference>
<dbReference type="HAMAP" id="MF_00418">
    <property type="entry name" value="DapA"/>
    <property type="match status" value="1"/>
</dbReference>
<dbReference type="InterPro" id="IPR013785">
    <property type="entry name" value="Aldolase_TIM"/>
</dbReference>
<dbReference type="InterPro" id="IPR005263">
    <property type="entry name" value="DapA"/>
</dbReference>
<dbReference type="InterPro" id="IPR002220">
    <property type="entry name" value="DapA-like"/>
</dbReference>
<dbReference type="InterPro" id="IPR020625">
    <property type="entry name" value="Schiff_base-form_aldolases_AS"/>
</dbReference>
<dbReference type="InterPro" id="IPR020624">
    <property type="entry name" value="Schiff_base-form_aldolases_CS"/>
</dbReference>
<dbReference type="NCBIfam" id="TIGR00674">
    <property type="entry name" value="dapA"/>
    <property type="match status" value="1"/>
</dbReference>
<dbReference type="PANTHER" id="PTHR12128:SF66">
    <property type="entry name" value="4-HYDROXY-2-OXOGLUTARATE ALDOLASE, MITOCHONDRIAL"/>
    <property type="match status" value="1"/>
</dbReference>
<dbReference type="PANTHER" id="PTHR12128">
    <property type="entry name" value="DIHYDRODIPICOLINATE SYNTHASE"/>
    <property type="match status" value="1"/>
</dbReference>
<dbReference type="Pfam" id="PF00701">
    <property type="entry name" value="DHDPS"/>
    <property type="match status" value="1"/>
</dbReference>
<dbReference type="PIRSF" id="PIRSF001365">
    <property type="entry name" value="DHDPS"/>
    <property type="match status" value="1"/>
</dbReference>
<dbReference type="PRINTS" id="PR00146">
    <property type="entry name" value="DHPICSNTHASE"/>
</dbReference>
<dbReference type="SMART" id="SM01130">
    <property type="entry name" value="DHDPS"/>
    <property type="match status" value="1"/>
</dbReference>
<dbReference type="SUPFAM" id="SSF51569">
    <property type="entry name" value="Aldolase"/>
    <property type="match status" value="1"/>
</dbReference>
<dbReference type="PROSITE" id="PS00665">
    <property type="entry name" value="DHDPS_1"/>
    <property type="match status" value="1"/>
</dbReference>
<dbReference type="PROSITE" id="PS00666">
    <property type="entry name" value="DHDPS_2"/>
    <property type="match status" value="1"/>
</dbReference>
<proteinExistence type="inferred from homology"/>